<organism>
    <name type="scientific">Brucella canis (strain ATCC 23365 / NCTC 10854 / RM-666)</name>
    <dbReference type="NCBI Taxonomy" id="483179"/>
    <lineage>
        <taxon>Bacteria</taxon>
        <taxon>Pseudomonadati</taxon>
        <taxon>Pseudomonadota</taxon>
        <taxon>Alphaproteobacteria</taxon>
        <taxon>Hyphomicrobiales</taxon>
        <taxon>Brucellaceae</taxon>
        <taxon>Brucella/Ochrobactrum group</taxon>
        <taxon>Brucella</taxon>
    </lineage>
</organism>
<gene>
    <name evidence="1" type="primary">groES</name>
    <name evidence="1" type="synonym">groS</name>
    <name type="ordered locus">BCAN_B0196</name>
</gene>
<reference key="1">
    <citation type="submission" date="2007-10" db="EMBL/GenBank/DDBJ databases">
        <title>Brucella canis ATCC 23365 whole genome shotgun sequencing project.</title>
        <authorList>
            <person name="Setubal J.C."/>
            <person name="Bowns C."/>
            <person name="Boyle S."/>
            <person name="Crasta O.R."/>
            <person name="Czar M.J."/>
            <person name="Dharmanolla C."/>
            <person name="Gillespie J.J."/>
            <person name="Kenyon R.W."/>
            <person name="Lu J."/>
            <person name="Mane S."/>
            <person name="Mohapatra S."/>
            <person name="Nagrani S."/>
            <person name="Purkayastha A."/>
            <person name="Rajasimha H.K."/>
            <person name="Shallom J.M."/>
            <person name="Shallom S."/>
            <person name="Shukla M."/>
            <person name="Snyder E.E."/>
            <person name="Sobral B.W."/>
            <person name="Wattam A.R."/>
            <person name="Will R."/>
            <person name="Williams K."/>
            <person name="Yoo H."/>
            <person name="Bruce D."/>
            <person name="Detter C."/>
            <person name="Munk C."/>
            <person name="Brettin T.S."/>
        </authorList>
    </citation>
    <scope>NUCLEOTIDE SEQUENCE [LARGE SCALE GENOMIC DNA]</scope>
    <source>
        <strain>ATCC 23365 / NCTC 10854 / RM-666</strain>
    </source>
</reference>
<feature type="chain" id="PRO_1000082366" description="Co-chaperonin GroES">
    <location>
        <begin position="1"/>
        <end position="98"/>
    </location>
</feature>
<comment type="function">
    <text evidence="1">Together with the chaperonin GroEL, plays an essential role in assisting protein folding. The GroEL-GroES system forms a nano-cage that allows encapsulation of the non-native substrate proteins and provides a physical environment optimized to promote and accelerate protein folding. GroES binds to the apical surface of the GroEL ring, thereby capping the opening of the GroEL channel.</text>
</comment>
<comment type="subunit">
    <text evidence="1">Heptamer of 7 subunits arranged in a ring. Interacts with the chaperonin GroEL.</text>
</comment>
<comment type="subcellular location">
    <subcellularLocation>
        <location evidence="1">Cytoplasm</location>
    </subcellularLocation>
</comment>
<comment type="similarity">
    <text evidence="1">Belongs to the GroES chaperonin family.</text>
</comment>
<evidence type="ECO:0000255" key="1">
    <source>
        <dbReference type="HAMAP-Rule" id="MF_00580"/>
    </source>
</evidence>
<sequence>MADIKFRPLHDRVVVRRVESEAKTAGGIIIPDTAKEKPQEGEVVAAGAGARDEAGKLVPLDVKAGDRVLFGKWSGTEVKIGGEDLLIMKESDILGIVG</sequence>
<proteinExistence type="inferred from homology"/>
<accession>A9MDV2</accession>
<dbReference type="EMBL" id="CP000873">
    <property type="protein sequence ID" value="ABX63390.1"/>
    <property type="molecule type" value="Genomic_DNA"/>
</dbReference>
<dbReference type="RefSeq" id="WP_002966386.1">
    <property type="nucleotide sequence ID" value="NC_010104.1"/>
</dbReference>
<dbReference type="SMR" id="A9MDV2"/>
<dbReference type="GeneID" id="97535613"/>
<dbReference type="KEGG" id="bcs:BCAN_B0196"/>
<dbReference type="HOGENOM" id="CLU_132825_1_0_5"/>
<dbReference type="Proteomes" id="UP000001385">
    <property type="component" value="Chromosome II"/>
</dbReference>
<dbReference type="GO" id="GO:0005737">
    <property type="term" value="C:cytoplasm"/>
    <property type="evidence" value="ECO:0007669"/>
    <property type="project" value="UniProtKB-SubCell"/>
</dbReference>
<dbReference type="GO" id="GO:0005524">
    <property type="term" value="F:ATP binding"/>
    <property type="evidence" value="ECO:0007669"/>
    <property type="project" value="InterPro"/>
</dbReference>
<dbReference type="GO" id="GO:0046872">
    <property type="term" value="F:metal ion binding"/>
    <property type="evidence" value="ECO:0007669"/>
    <property type="project" value="TreeGrafter"/>
</dbReference>
<dbReference type="GO" id="GO:0044183">
    <property type="term" value="F:protein folding chaperone"/>
    <property type="evidence" value="ECO:0007669"/>
    <property type="project" value="InterPro"/>
</dbReference>
<dbReference type="GO" id="GO:0051087">
    <property type="term" value="F:protein-folding chaperone binding"/>
    <property type="evidence" value="ECO:0007669"/>
    <property type="project" value="TreeGrafter"/>
</dbReference>
<dbReference type="GO" id="GO:0051082">
    <property type="term" value="F:unfolded protein binding"/>
    <property type="evidence" value="ECO:0007669"/>
    <property type="project" value="TreeGrafter"/>
</dbReference>
<dbReference type="GO" id="GO:0051085">
    <property type="term" value="P:chaperone cofactor-dependent protein refolding"/>
    <property type="evidence" value="ECO:0007669"/>
    <property type="project" value="TreeGrafter"/>
</dbReference>
<dbReference type="CDD" id="cd00320">
    <property type="entry name" value="cpn10"/>
    <property type="match status" value="1"/>
</dbReference>
<dbReference type="FunFam" id="2.30.33.40:FF:000001">
    <property type="entry name" value="10 kDa chaperonin"/>
    <property type="match status" value="1"/>
</dbReference>
<dbReference type="Gene3D" id="2.30.33.40">
    <property type="entry name" value="GroES chaperonin"/>
    <property type="match status" value="1"/>
</dbReference>
<dbReference type="HAMAP" id="MF_00580">
    <property type="entry name" value="CH10"/>
    <property type="match status" value="1"/>
</dbReference>
<dbReference type="InterPro" id="IPR020818">
    <property type="entry name" value="Chaperonin_GroES"/>
</dbReference>
<dbReference type="InterPro" id="IPR037124">
    <property type="entry name" value="Chaperonin_GroES_sf"/>
</dbReference>
<dbReference type="InterPro" id="IPR018369">
    <property type="entry name" value="Chaprnonin_Cpn10_CS"/>
</dbReference>
<dbReference type="InterPro" id="IPR011032">
    <property type="entry name" value="GroES-like_sf"/>
</dbReference>
<dbReference type="NCBIfam" id="NF001527">
    <property type="entry name" value="PRK00364.1-2"/>
    <property type="match status" value="1"/>
</dbReference>
<dbReference type="NCBIfam" id="NF001529">
    <property type="entry name" value="PRK00364.1-5"/>
    <property type="match status" value="1"/>
</dbReference>
<dbReference type="NCBIfam" id="NF001531">
    <property type="entry name" value="PRK00364.2-2"/>
    <property type="match status" value="1"/>
</dbReference>
<dbReference type="NCBIfam" id="NF001533">
    <property type="entry name" value="PRK00364.2-4"/>
    <property type="match status" value="1"/>
</dbReference>
<dbReference type="NCBIfam" id="NF001534">
    <property type="entry name" value="PRK00364.2-5"/>
    <property type="match status" value="1"/>
</dbReference>
<dbReference type="PANTHER" id="PTHR10772">
    <property type="entry name" value="10 KDA HEAT SHOCK PROTEIN"/>
    <property type="match status" value="1"/>
</dbReference>
<dbReference type="PANTHER" id="PTHR10772:SF58">
    <property type="entry name" value="CO-CHAPERONIN GROES"/>
    <property type="match status" value="1"/>
</dbReference>
<dbReference type="Pfam" id="PF00166">
    <property type="entry name" value="Cpn10"/>
    <property type="match status" value="1"/>
</dbReference>
<dbReference type="PRINTS" id="PR00297">
    <property type="entry name" value="CHAPERONIN10"/>
</dbReference>
<dbReference type="SMART" id="SM00883">
    <property type="entry name" value="Cpn10"/>
    <property type="match status" value="1"/>
</dbReference>
<dbReference type="SUPFAM" id="SSF50129">
    <property type="entry name" value="GroES-like"/>
    <property type="match status" value="1"/>
</dbReference>
<dbReference type="PROSITE" id="PS00681">
    <property type="entry name" value="CHAPERONINS_CPN10"/>
    <property type="match status" value="1"/>
</dbReference>
<keyword id="KW-0143">Chaperone</keyword>
<keyword id="KW-0963">Cytoplasm</keyword>
<keyword id="KW-1185">Reference proteome</keyword>
<protein>
    <recommendedName>
        <fullName evidence="1">Co-chaperonin GroES</fullName>
    </recommendedName>
    <alternativeName>
        <fullName evidence="1">10 kDa chaperonin</fullName>
    </alternativeName>
    <alternativeName>
        <fullName evidence="1">Chaperonin-10</fullName>
        <shortName evidence="1">Cpn10</shortName>
    </alternativeName>
</protein>
<name>CH10_BRUC2</name>